<accession>A0KR66</accession>
<sequence length="188" mass="20305">MLQLHPSEIKDLVLNGGVIAYPTEAVYGLGCDPDNDTAIQKLLAVKQRPWQKGLILVASEFSQLVDYVDESQLSAEQLEFAFSKWPGPFTFVMPIKPHVSRYLCGEFDSIAVRVSAHDGVRALCQALGKPLVSTSANLAGEDPALSGDEILNAFEGKIDALVLGALGEQRQPSTIIDARSGKILRNGQ</sequence>
<gene>
    <name evidence="1" type="primary">tsaC</name>
    <name type="synonym">rimN</name>
    <name type="ordered locus">Shewana3_0040</name>
</gene>
<protein>
    <recommendedName>
        <fullName evidence="1">Threonylcarbamoyl-AMP synthase</fullName>
        <shortName evidence="1">TC-AMP synthase</shortName>
        <ecNumber evidence="1">2.7.7.87</ecNumber>
    </recommendedName>
    <alternativeName>
        <fullName evidence="1">L-threonylcarbamoyladenylate synthase</fullName>
    </alternativeName>
    <alternativeName>
        <fullName evidence="1">t(6)A37 threonylcarbamoyladenosine biosynthesis protein TsaC</fullName>
    </alternativeName>
    <alternativeName>
        <fullName evidence="1">tRNA threonylcarbamoyladenosine biosynthesis protein TsaC</fullName>
    </alternativeName>
</protein>
<proteinExistence type="inferred from homology"/>
<evidence type="ECO:0000255" key="1">
    <source>
        <dbReference type="HAMAP-Rule" id="MF_01852"/>
    </source>
</evidence>
<name>TSAC_SHESA</name>
<feature type="chain" id="PRO_0000352986" description="Threonylcarbamoyl-AMP synthase">
    <location>
        <begin position="1"/>
        <end position="188"/>
    </location>
</feature>
<feature type="domain" description="YrdC-like" evidence="1">
    <location>
        <begin position="3"/>
        <end position="188"/>
    </location>
</feature>
<dbReference type="EC" id="2.7.7.87" evidence="1"/>
<dbReference type="EMBL" id="CP000469">
    <property type="protein sequence ID" value="ABK46285.1"/>
    <property type="molecule type" value="Genomic_DNA"/>
</dbReference>
<dbReference type="RefSeq" id="WP_011715330.1">
    <property type="nucleotide sequence ID" value="NC_008577.1"/>
</dbReference>
<dbReference type="SMR" id="A0KR66"/>
<dbReference type="STRING" id="94122.Shewana3_0040"/>
<dbReference type="KEGG" id="shn:Shewana3_0040"/>
<dbReference type="eggNOG" id="COG0009">
    <property type="taxonomic scope" value="Bacteria"/>
</dbReference>
<dbReference type="HOGENOM" id="CLU_031397_6_0_6"/>
<dbReference type="OrthoDB" id="9814580at2"/>
<dbReference type="Proteomes" id="UP000002589">
    <property type="component" value="Chromosome"/>
</dbReference>
<dbReference type="GO" id="GO:0005737">
    <property type="term" value="C:cytoplasm"/>
    <property type="evidence" value="ECO:0007669"/>
    <property type="project" value="UniProtKB-SubCell"/>
</dbReference>
<dbReference type="GO" id="GO:0005524">
    <property type="term" value="F:ATP binding"/>
    <property type="evidence" value="ECO:0007669"/>
    <property type="project" value="UniProtKB-UniRule"/>
</dbReference>
<dbReference type="GO" id="GO:0003725">
    <property type="term" value="F:double-stranded RNA binding"/>
    <property type="evidence" value="ECO:0007669"/>
    <property type="project" value="InterPro"/>
</dbReference>
<dbReference type="GO" id="GO:0061710">
    <property type="term" value="F:L-threonylcarbamoyladenylate synthase"/>
    <property type="evidence" value="ECO:0007669"/>
    <property type="project" value="UniProtKB-EC"/>
</dbReference>
<dbReference type="GO" id="GO:0000049">
    <property type="term" value="F:tRNA binding"/>
    <property type="evidence" value="ECO:0007669"/>
    <property type="project" value="TreeGrafter"/>
</dbReference>
<dbReference type="GO" id="GO:0006450">
    <property type="term" value="P:regulation of translational fidelity"/>
    <property type="evidence" value="ECO:0007669"/>
    <property type="project" value="TreeGrafter"/>
</dbReference>
<dbReference type="GO" id="GO:0002949">
    <property type="term" value="P:tRNA threonylcarbamoyladenosine modification"/>
    <property type="evidence" value="ECO:0007669"/>
    <property type="project" value="UniProtKB-UniRule"/>
</dbReference>
<dbReference type="FunFam" id="3.90.870.10:FF:000017">
    <property type="entry name" value="Threonylcarbamoyl-AMP synthase"/>
    <property type="match status" value="1"/>
</dbReference>
<dbReference type="Gene3D" id="3.90.870.10">
    <property type="entry name" value="DHBP synthase"/>
    <property type="match status" value="1"/>
</dbReference>
<dbReference type="HAMAP" id="MF_01852">
    <property type="entry name" value="TsaC"/>
    <property type="match status" value="1"/>
</dbReference>
<dbReference type="InterPro" id="IPR017945">
    <property type="entry name" value="DHBP_synth_RibB-like_a/b_dom"/>
</dbReference>
<dbReference type="InterPro" id="IPR006070">
    <property type="entry name" value="Sua5-like_dom"/>
</dbReference>
<dbReference type="InterPro" id="IPR023535">
    <property type="entry name" value="TC-AMP_synthase"/>
</dbReference>
<dbReference type="InterPro" id="IPR050156">
    <property type="entry name" value="TC-AMP_synthase_SUA5"/>
</dbReference>
<dbReference type="NCBIfam" id="TIGR00057">
    <property type="entry name" value="L-threonylcarbamoyladenylate synthase"/>
    <property type="match status" value="1"/>
</dbReference>
<dbReference type="PANTHER" id="PTHR17490">
    <property type="entry name" value="SUA5"/>
    <property type="match status" value="1"/>
</dbReference>
<dbReference type="PANTHER" id="PTHR17490:SF18">
    <property type="entry name" value="THREONYLCARBAMOYL-AMP SYNTHASE"/>
    <property type="match status" value="1"/>
</dbReference>
<dbReference type="Pfam" id="PF01300">
    <property type="entry name" value="Sua5_yciO_yrdC"/>
    <property type="match status" value="1"/>
</dbReference>
<dbReference type="SUPFAM" id="SSF55821">
    <property type="entry name" value="YrdC/RibB"/>
    <property type="match status" value="1"/>
</dbReference>
<dbReference type="PROSITE" id="PS51163">
    <property type="entry name" value="YRDC"/>
    <property type="match status" value="1"/>
</dbReference>
<organism>
    <name type="scientific">Shewanella sp. (strain ANA-3)</name>
    <dbReference type="NCBI Taxonomy" id="94122"/>
    <lineage>
        <taxon>Bacteria</taxon>
        <taxon>Pseudomonadati</taxon>
        <taxon>Pseudomonadota</taxon>
        <taxon>Gammaproteobacteria</taxon>
        <taxon>Alteromonadales</taxon>
        <taxon>Shewanellaceae</taxon>
        <taxon>Shewanella</taxon>
    </lineage>
</organism>
<keyword id="KW-0067">ATP-binding</keyword>
<keyword id="KW-0963">Cytoplasm</keyword>
<keyword id="KW-0547">Nucleotide-binding</keyword>
<keyword id="KW-0548">Nucleotidyltransferase</keyword>
<keyword id="KW-0808">Transferase</keyword>
<keyword id="KW-0819">tRNA processing</keyword>
<reference key="1">
    <citation type="submission" date="2006-09" db="EMBL/GenBank/DDBJ databases">
        <title>Complete sequence of chromosome 1 of Shewanella sp. ANA-3.</title>
        <authorList>
            <person name="Copeland A."/>
            <person name="Lucas S."/>
            <person name="Lapidus A."/>
            <person name="Barry K."/>
            <person name="Detter J.C."/>
            <person name="Glavina del Rio T."/>
            <person name="Hammon N."/>
            <person name="Israni S."/>
            <person name="Dalin E."/>
            <person name="Tice H."/>
            <person name="Pitluck S."/>
            <person name="Chertkov O."/>
            <person name="Brettin T."/>
            <person name="Bruce D."/>
            <person name="Han C."/>
            <person name="Tapia R."/>
            <person name="Gilna P."/>
            <person name="Schmutz J."/>
            <person name="Larimer F."/>
            <person name="Land M."/>
            <person name="Hauser L."/>
            <person name="Kyrpides N."/>
            <person name="Kim E."/>
            <person name="Newman D."/>
            <person name="Salticov C."/>
            <person name="Konstantinidis K."/>
            <person name="Klappenback J."/>
            <person name="Tiedje J."/>
            <person name="Richardson P."/>
        </authorList>
    </citation>
    <scope>NUCLEOTIDE SEQUENCE [LARGE SCALE GENOMIC DNA]</scope>
    <source>
        <strain>ANA-3</strain>
    </source>
</reference>
<comment type="function">
    <text evidence="1">Required for the formation of a threonylcarbamoyl group on adenosine at position 37 (t(6)A37) in tRNAs that read codons beginning with adenine. Catalyzes the conversion of L-threonine, HCO(3)(-)/CO(2) and ATP to give threonylcarbamoyl-AMP (TC-AMP) as the acyladenylate intermediate, with the release of diphosphate.</text>
</comment>
<comment type="catalytic activity">
    <reaction evidence="1">
        <text>L-threonine + hydrogencarbonate + ATP = L-threonylcarbamoyladenylate + diphosphate + H2O</text>
        <dbReference type="Rhea" id="RHEA:36407"/>
        <dbReference type="ChEBI" id="CHEBI:15377"/>
        <dbReference type="ChEBI" id="CHEBI:17544"/>
        <dbReference type="ChEBI" id="CHEBI:30616"/>
        <dbReference type="ChEBI" id="CHEBI:33019"/>
        <dbReference type="ChEBI" id="CHEBI:57926"/>
        <dbReference type="ChEBI" id="CHEBI:73682"/>
        <dbReference type="EC" id="2.7.7.87"/>
    </reaction>
</comment>
<comment type="subcellular location">
    <subcellularLocation>
        <location evidence="1">Cytoplasm</location>
    </subcellularLocation>
</comment>
<comment type="similarity">
    <text evidence="1">Belongs to the SUA5 family. TsaC subfamily.</text>
</comment>